<keyword id="KW-0029">Amino-acid transport</keyword>
<keyword id="KW-0965">Cell junction</keyword>
<keyword id="KW-1003">Cell membrane</keyword>
<keyword id="KW-1015">Disulfide bond</keyword>
<keyword id="KW-0325">Glycoprotein</keyword>
<keyword id="KW-1017">Isopeptide bond</keyword>
<keyword id="KW-0458">Lysosome</keyword>
<keyword id="KW-0472">Membrane</keyword>
<keyword id="KW-0597">Phosphoprotein</keyword>
<keyword id="KW-1185">Reference proteome</keyword>
<keyword id="KW-0735">Signal-anchor</keyword>
<keyword id="KW-0812">Transmembrane</keyword>
<keyword id="KW-1133">Transmembrane helix</keyword>
<keyword id="KW-0813">Transport</keyword>
<keyword id="KW-0832">Ubl conjugation</keyword>
<gene>
    <name evidence="19" type="primary">Slc3a2</name>
</gene>
<dbReference type="EMBL" id="U59324">
    <property type="protein sequence ID" value="AAC53560.1"/>
    <property type="molecule type" value="mRNA"/>
</dbReference>
<dbReference type="EMBL" id="AB015433">
    <property type="protein sequence ID" value="BAA33036.1"/>
    <property type="molecule type" value="mRNA"/>
</dbReference>
<dbReference type="EMBL" id="BC061989">
    <property type="protein sequence ID" value="AAH61989.1"/>
    <property type="molecule type" value="mRNA"/>
</dbReference>
<dbReference type="RefSeq" id="NP_001258018.1">
    <property type="nucleotide sequence ID" value="NM_001271089.2"/>
</dbReference>
<dbReference type="RefSeq" id="XP_038944421.1">
    <property type="nucleotide sequence ID" value="XM_039088493.2"/>
</dbReference>
<dbReference type="SMR" id="Q794F9"/>
<dbReference type="BioGRID" id="248392">
    <property type="interactions" value="3"/>
</dbReference>
<dbReference type="FunCoup" id="Q794F9">
    <property type="interactions" value="1230"/>
</dbReference>
<dbReference type="IntAct" id="Q794F9">
    <property type="interactions" value="2"/>
</dbReference>
<dbReference type="MINT" id="Q794F9"/>
<dbReference type="STRING" id="10116.ENSRNOP00000025196"/>
<dbReference type="CAZy" id="GH13">
    <property type="family name" value="Glycoside Hydrolase Family 13"/>
</dbReference>
<dbReference type="CarbonylDB" id="Q794F9"/>
<dbReference type="GlyCosmos" id="Q794F9">
    <property type="glycosylation" value="8 sites, 8 glycans"/>
</dbReference>
<dbReference type="GlyGen" id="Q794F9">
    <property type="glycosylation" value="8 sites, 12 N-linked glycans (3 sites), 4 N-linked;o-linked glycans (1 site)"/>
</dbReference>
<dbReference type="iPTMnet" id="Q794F9"/>
<dbReference type="PhosphoSitePlus" id="Q794F9"/>
<dbReference type="SwissPalm" id="Q794F9"/>
<dbReference type="jPOST" id="Q794F9"/>
<dbReference type="PaxDb" id="10116-ENSRNOP00000025196"/>
<dbReference type="GeneID" id="50567"/>
<dbReference type="KEGG" id="rno:50567"/>
<dbReference type="UCSC" id="RGD:3073">
    <property type="organism name" value="rat"/>
</dbReference>
<dbReference type="AGR" id="RGD:3073"/>
<dbReference type="CTD" id="6520"/>
<dbReference type="RGD" id="3073">
    <property type="gene designation" value="Slc3a2"/>
</dbReference>
<dbReference type="eggNOG" id="KOG0471">
    <property type="taxonomic scope" value="Eukaryota"/>
</dbReference>
<dbReference type="HOGENOM" id="CLU_006462_9_0_1"/>
<dbReference type="InParanoid" id="Q794F9"/>
<dbReference type="OrthoDB" id="1740265at2759"/>
<dbReference type="PhylomeDB" id="Q794F9"/>
<dbReference type="TreeFam" id="TF314498"/>
<dbReference type="Reactome" id="R-RNO-210991">
    <property type="pathway name" value="Basigin interactions"/>
</dbReference>
<dbReference type="Reactome" id="R-RNO-352230">
    <property type="pathway name" value="Amino acid transport across the plasma membrane"/>
</dbReference>
<dbReference type="Reactome" id="R-RNO-71240">
    <property type="pathway name" value="Tryptophan catabolism"/>
</dbReference>
<dbReference type="SABIO-RK" id="Q794F9"/>
<dbReference type="PRO" id="PR:Q794F9"/>
<dbReference type="Proteomes" id="UP000002494">
    <property type="component" value="Unplaced"/>
</dbReference>
<dbReference type="GO" id="GO:1990184">
    <property type="term" value="C:amino acid transport complex"/>
    <property type="evidence" value="ECO:0000266"/>
    <property type="project" value="RGD"/>
</dbReference>
<dbReference type="GO" id="GO:0070161">
    <property type="term" value="C:anchoring junction"/>
    <property type="evidence" value="ECO:0007669"/>
    <property type="project" value="UniProtKB-SubCell"/>
</dbReference>
<dbReference type="GO" id="GO:0016324">
    <property type="term" value="C:apical plasma membrane"/>
    <property type="evidence" value="ECO:0000314"/>
    <property type="project" value="ARUK-UCL"/>
</dbReference>
<dbReference type="GO" id="GO:0044225">
    <property type="term" value="C:apical pole of neuron"/>
    <property type="evidence" value="ECO:0000266"/>
    <property type="project" value="RGD"/>
</dbReference>
<dbReference type="GO" id="GO:0009925">
    <property type="term" value="C:basal plasma membrane"/>
    <property type="evidence" value="ECO:0000314"/>
    <property type="project" value="ARUK-UCL"/>
</dbReference>
<dbReference type="GO" id="GO:0016323">
    <property type="term" value="C:basolateral plasma membrane"/>
    <property type="evidence" value="ECO:0000266"/>
    <property type="project" value="RGD"/>
</dbReference>
<dbReference type="GO" id="GO:0009986">
    <property type="term" value="C:cell surface"/>
    <property type="evidence" value="ECO:0000266"/>
    <property type="project" value="RGD"/>
</dbReference>
<dbReference type="GO" id="GO:0005765">
    <property type="term" value="C:lysosomal membrane"/>
    <property type="evidence" value="ECO:0007669"/>
    <property type="project" value="UniProtKB-SubCell"/>
</dbReference>
<dbReference type="GO" id="GO:0042470">
    <property type="term" value="C:melanosome"/>
    <property type="evidence" value="ECO:0007669"/>
    <property type="project" value="UniProtKB-SubCell"/>
</dbReference>
<dbReference type="GO" id="GO:0043025">
    <property type="term" value="C:neuronal cell body"/>
    <property type="evidence" value="ECO:0000266"/>
    <property type="project" value="RGD"/>
</dbReference>
<dbReference type="GO" id="GO:0005886">
    <property type="term" value="C:plasma membrane"/>
    <property type="evidence" value="ECO:0000250"/>
    <property type="project" value="UniProtKB"/>
</dbReference>
<dbReference type="GO" id="GO:0045202">
    <property type="term" value="C:synapse"/>
    <property type="evidence" value="ECO:0000266"/>
    <property type="project" value="RGD"/>
</dbReference>
<dbReference type="GO" id="GO:0015173">
    <property type="term" value="F:aromatic amino acid transmembrane transporter activity"/>
    <property type="evidence" value="ECO:0000266"/>
    <property type="project" value="RGD"/>
</dbReference>
<dbReference type="GO" id="GO:0003725">
    <property type="term" value="F:double-stranded RNA binding"/>
    <property type="evidence" value="ECO:0000266"/>
    <property type="project" value="RGD"/>
</dbReference>
<dbReference type="GO" id="GO:0140272">
    <property type="term" value="F:exogenous protein binding"/>
    <property type="evidence" value="ECO:0000266"/>
    <property type="project" value="RGD"/>
</dbReference>
<dbReference type="GO" id="GO:0015180">
    <property type="term" value="F:L-alanine transmembrane transporter activity"/>
    <property type="evidence" value="ECO:0000266"/>
    <property type="project" value="RGD"/>
</dbReference>
<dbReference type="GO" id="GO:0015190">
    <property type="term" value="F:L-leucine transmembrane transporter activity"/>
    <property type="evidence" value="ECO:0000266"/>
    <property type="project" value="RGD"/>
</dbReference>
<dbReference type="GO" id="GO:0015175">
    <property type="term" value="F:neutral L-amino acid transmembrane transporter activity"/>
    <property type="evidence" value="ECO:0000315"/>
    <property type="project" value="RGD"/>
</dbReference>
<dbReference type="GO" id="GO:0046982">
    <property type="term" value="F:protein heterodimerization activity"/>
    <property type="evidence" value="ECO:0000266"/>
    <property type="project" value="RGD"/>
</dbReference>
<dbReference type="GO" id="GO:0042803">
    <property type="term" value="F:protein homodimerization activity"/>
    <property type="evidence" value="ECO:0000266"/>
    <property type="project" value="RGD"/>
</dbReference>
<dbReference type="GO" id="GO:0005975">
    <property type="term" value="P:carbohydrate metabolic process"/>
    <property type="evidence" value="ECO:0007669"/>
    <property type="project" value="InterPro"/>
</dbReference>
<dbReference type="GO" id="GO:0042149">
    <property type="term" value="P:cellular response to glucose starvation"/>
    <property type="evidence" value="ECO:0000270"/>
    <property type="project" value="RGD"/>
</dbReference>
<dbReference type="GO" id="GO:0015818">
    <property type="term" value="P:isoleucine transport"/>
    <property type="evidence" value="ECO:0000266"/>
    <property type="project" value="RGD"/>
</dbReference>
<dbReference type="GO" id="GO:1904273">
    <property type="term" value="P:L-alanine import across plasma membrane"/>
    <property type="evidence" value="ECO:0000266"/>
    <property type="project" value="RGD"/>
</dbReference>
<dbReference type="GO" id="GO:1902024">
    <property type="term" value="P:L-histidine transport"/>
    <property type="evidence" value="ECO:0000314"/>
    <property type="project" value="UniProtKB"/>
</dbReference>
<dbReference type="GO" id="GO:1903801">
    <property type="term" value="P:L-leucine import across plasma membrane"/>
    <property type="evidence" value="ECO:0000314"/>
    <property type="project" value="UniProtKB"/>
</dbReference>
<dbReference type="GO" id="GO:0015820">
    <property type="term" value="P:L-leucine transport"/>
    <property type="evidence" value="ECO:0000314"/>
    <property type="project" value="UniProtKB"/>
</dbReference>
<dbReference type="GO" id="GO:0015821">
    <property type="term" value="P:methionine transport"/>
    <property type="evidence" value="ECO:0000266"/>
    <property type="project" value="RGD"/>
</dbReference>
<dbReference type="GO" id="GO:0015804">
    <property type="term" value="P:neutral amino acid transport"/>
    <property type="evidence" value="ECO:0000315"/>
    <property type="project" value="RGD"/>
</dbReference>
<dbReference type="GO" id="GO:0015823">
    <property type="term" value="P:phenylalanine transport"/>
    <property type="evidence" value="ECO:0000314"/>
    <property type="project" value="UniProtKB"/>
</dbReference>
<dbReference type="GO" id="GO:0015824">
    <property type="term" value="P:proline transport"/>
    <property type="evidence" value="ECO:0000266"/>
    <property type="project" value="RGD"/>
</dbReference>
<dbReference type="GO" id="GO:0043330">
    <property type="term" value="P:response to exogenous dsRNA"/>
    <property type="evidence" value="ECO:0000266"/>
    <property type="project" value="RGD"/>
</dbReference>
<dbReference type="GO" id="GO:0014850">
    <property type="term" value="P:response to muscle activity"/>
    <property type="evidence" value="ECO:0000270"/>
    <property type="project" value="RGD"/>
</dbReference>
<dbReference type="GO" id="GO:0046718">
    <property type="term" value="P:symbiont entry into host cell"/>
    <property type="evidence" value="ECO:0000266"/>
    <property type="project" value="RGD"/>
</dbReference>
<dbReference type="GO" id="GO:0070327">
    <property type="term" value="P:thyroid hormone transport"/>
    <property type="evidence" value="ECO:0000266"/>
    <property type="project" value="RGD"/>
</dbReference>
<dbReference type="GO" id="GO:0015827">
    <property type="term" value="P:tryptophan transport"/>
    <property type="evidence" value="ECO:0000314"/>
    <property type="project" value="UniProtKB"/>
</dbReference>
<dbReference type="GO" id="GO:0015828">
    <property type="term" value="P:tyrosine transport"/>
    <property type="evidence" value="ECO:0000266"/>
    <property type="project" value="RGD"/>
</dbReference>
<dbReference type="GO" id="GO:0015829">
    <property type="term" value="P:valine transport"/>
    <property type="evidence" value="ECO:0000266"/>
    <property type="project" value="RGD"/>
</dbReference>
<dbReference type="FunFam" id="3.20.20.80:FF:000061">
    <property type="entry name" value="4F2 cell-surface antigen heavy chain"/>
    <property type="match status" value="1"/>
</dbReference>
<dbReference type="Gene3D" id="3.20.20.80">
    <property type="entry name" value="Glycosidases"/>
    <property type="match status" value="1"/>
</dbReference>
<dbReference type="Gene3D" id="2.60.40.1180">
    <property type="entry name" value="Golgi alpha-mannosidase II"/>
    <property type="match status" value="1"/>
</dbReference>
<dbReference type="InterPro" id="IPR006047">
    <property type="entry name" value="Glyco_hydro_13_cat_dom"/>
</dbReference>
<dbReference type="InterPro" id="IPR013780">
    <property type="entry name" value="Glyco_hydro_b"/>
</dbReference>
<dbReference type="InterPro" id="IPR017853">
    <property type="entry name" value="Glycoside_hydrolase_SF"/>
</dbReference>
<dbReference type="InterPro" id="IPR042280">
    <property type="entry name" value="SLC3A2"/>
</dbReference>
<dbReference type="InterPro" id="IPR031984">
    <property type="entry name" value="SLC3A2_N"/>
</dbReference>
<dbReference type="PANTHER" id="PTHR46673">
    <property type="entry name" value="4F2 CELL-SURFACE ANTIGEN HEAVY CHAIN"/>
    <property type="match status" value="1"/>
</dbReference>
<dbReference type="PANTHER" id="PTHR46673:SF1">
    <property type="entry name" value="4F2 CELL-SURFACE ANTIGEN HEAVY CHAIN"/>
    <property type="match status" value="1"/>
</dbReference>
<dbReference type="Pfam" id="PF00128">
    <property type="entry name" value="Alpha-amylase"/>
    <property type="match status" value="1"/>
</dbReference>
<dbReference type="Pfam" id="PF16028">
    <property type="entry name" value="SLC3A2_N"/>
    <property type="match status" value="1"/>
</dbReference>
<dbReference type="SMART" id="SM00642">
    <property type="entry name" value="Aamy"/>
    <property type="match status" value="1"/>
</dbReference>
<dbReference type="SUPFAM" id="SSF51445">
    <property type="entry name" value="(Trans)glycosidases"/>
    <property type="match status" value="1"/>
</dbReference>
<dbReference type="SUPFAM" id="SSF51011">
    <property type="entry name" value="Glycosyl hydrolase domain"/>
    <property type="match status" value="1"/>
</dbReference>
<comment type="function">
    <text evidence="1 3 6 7 9 11 12 13 14">Acts as a chaperone that facilitates biogenesis and trafficking of functional transporters heterodimers to the plasma membrane. Forms heterodimer with SLC7 family transporters (SLC7A5, SLC7A6, SLC7A7, SLC7A8, SLC7A10 and SLC7A11), a group of amino-acid antiporters (PubMed:10049700, PubMed:10391916, PubMed:12614332, PubMed:15980244, PubMed:23426681, PubMed:9480885, PubMed:9726963). Heterodimers function as amino acids exchangers, the specificity of the substrate depending on the SLC7A subunit (By similarity). Heterodimers formed by SLC3A2/SLC7A6 or SLC3A2/SLC7A7 mediate the uptake of dibasic amino acids. Heterodimer SLC3A2/SLC7A11 functions as an antiporter by mediating the exchange of extracellular anionic L-cystine and intracellular L-glutamate across the cellular plasma membrane (By similarity). SLC3A2/SLC7A10 translocates small neutral L- and D-amino acids across the plasma membrane (By similarity). SLC3A2/SLC75 or SLC3A2/SLC7A8 translocates neutral amino acids with broad specificity, thyroid hormones and L-DOPA. SLC3A2 is essential for plasma membrane localization, stability, and the transport activity of SLC7A5 and SLC7A8. When associated with LAPTM4B, the heterodimer SLC7A5 is recruited to lysosomes to promote leucine uptake into these organelles, and thereby mediates mTORC1 activation. Modulates integrin-related signaling and is essential for integrin-dependent cell spreading, migration and tumor progression (By similarity).</text>
</comment>
<comment type="subunit">
    <text evidence="1 6 7 14 16">Disulfide-linked heterodimer with a non-glycosylated light chain (SLC7A5, SLC7A6, SLC7A7, SLC7A8, SLC7A10 or SLC7A11) (PubMed:10049700, PubMed:10391916, PubMed:9480885, PubMed:9726963). Interacts with TLCD3A/CT120 and ICAM1. Constitutively and specifically associates with beta-1 integrins (alpha-2/beta-1, alpha-3/beta-1, alpha-5/beta-1 and alpha-6/beta-1), but minimally with alpha-4/beta-1. Interacts with LAPTM4B; recruits SLC3A2 and SLC7A5 to lysosomes to promote leucine uptake into these organelles and is required for mTORC1 activation (By similarity).</text>
</comment>
<comment type="subcellular location">
    <subcellularLocation>
        <location evidence="1">Apical cell membrane</location>
    </subcellularLocation>
    <subcellularLocation>
        <location evidence="7 8 13">Cell membrane</location>
        <topology evidence="1">Single-pass type II membrane protein</topology>
    </subcellularLocation>
    <subcellularLocation>
        <location evidence="2">Cell junction</location>
    </subcellularLocation>
    <subcellularLocation>
        <location evidence="1">Lysosome membrane</location>
    </subcellularLocation>
    <subcellularLocation>
        <location evidence="1">Melanosome</location>
    </subcellularLocation>
    <subcellularLocation>
        <location evidence="2">Basolateral cell membrane</location>
    </subcellularLocation>
    <text evidence="1 2 8">Localized at the plasma membrane when associated with SLC7A5 or SLC7A8. Localized to the apical membrane of placental syncytiotrophoblastic cells. Recruited to lysosomes by LAPTM4B (By similarity). Located selectively at cell-cell adhesion sites (By similarity). Colocalized with SLC7A8/LAT2 at the basolateral membrane of kidney proximal tubules and small intestine epithelia. Expressed in both luminal and abluminal membranes of brain capillary endothelial cells.</text>
</comment>
<comment type="tissue specificity">
    <text evidence="7 8 11">In brain expressed on capillary endothelia in cerebral cortex (at protein level) (PubMed:11095508). Highest expression in kidney, jejunum, ileum, colon, placenta, testis and spleen. Lower levels found in liver, lung and brain with weakest expression in heart. Expressed in retina, inner blood-retinal barrier of retina, retinal vascular endothelial cells. Also expressed in C6 glioma cells and in the retinal capillary endothelial cell line TR-iBRB2.</text>
</comment>
<comment type="induction">
    <text evidence="10">Expression induced in normal hepatic cells in the presence of actinomycin-D.</text>
</comment>
<comment type="PTM">
    <text evidence="1">Phosphorylation on Ser-300 and on Ser-421 by ecto-protein kinases favors heterotypic cell-cell interactions.</text>
</comment>
<comment type="PTM">
    <text evidence="1">N-glycosylated; N-glycosylation is crucial for trafficking and stability of SLC3A2 to the plasma membrane.</text>
</comment>
<comment type="similarity">
    <text evidence="4">Belongs to the SLC3A transporter family.</text>
</comment>
<reference evidence="13 17" key="1">
    <citation type="journal article" date="1998" name="Biochem. J.">
        <title>Cloning and functional expression of a cDNA from rat jejunal epithelium encoding a protein (4F2hc) with system y+L amino acid transport activity.</title>
        <authorList>
            <person name="Yao S.Y.M."/>
            <person name="Muzyka W.R."/>
            <person name="Elliott J.F."/>
            <person name="Cheeseman C.I."/>
            <person name="Young J.D."/>
        </authorList>
    </citation>
    <scope>NUCLEOTIDE SEQUENCE [MRNA]</scope>
    <scope>FUNCTION</scope>
    <scope>SUBCELLULAR LOCATION</scope>
    <scope>SUBUNIT</scope>
    <source>
        <strain evidence="17">Sprague-Dawley</strain>
        <tissue evidence="17">Jejunal epithelium</tissue>
    </source>
</reference>
<reference evidence="15 18" key="2">
    <citation type="journal article" date="1998" name="J. Biol. Chem.">
        <title>Expression cloning and characterization of a transporter for large neutral amino acids activated by the heavy chain of 4F2 antigen (CD98).</title>
        <authorList>
            <person name="Kanai Y."/>
            <person name="Segawa H."/>
            <person name="Miyamoto K."/>
            <person name="Uchino H."/>
            <person name="Takeda E."/>
            <person name="Endou H."/>
        </authorList>
    </citation>
    <scope>NUCLEOTIDE SEQUENCE [MRNA]</scope>
    <scope>FUNCTION</scope>
    <scope>SUBUNIT</scope>
    <source>
        <tissue evidence="14">Glial tumor</tissue>
    </source>
</reference>
<reference key="3">
    <citation type="journal article" date="2004" name="Genome Res.">
        <title>The status, quality, and expansion of the NIH full-length cDNA project: the Mammalian Gene Collection (MGC).</title>
        <authorList>
            <consortium name="The MGC Project Team"/>
        </authorList>
    </citation>
    <scope>NUCLEOTIDE SEQUENCE [LARGE SCALE MRNA]</scope>
</reference>
<reference key="4">
    <citation type="journal article" date="1999" name="Biochem. Biophys. Res. Commun.">
        <title>Human LAT1, a subunit of system L amino acid transporter: molecular cloning and transport function.</title>
        <authorList>
            <person name="Prasad P.D."/>
            <person name="Wang H."/>
            <person name="Huang W."/>
            <person name="Kekuda R."/>
            <person name="Rajan D.P."/>
            <person name="Leibach F.H."/>
            <person name="Ganapathy V."/>
        </authorList>
    </citation>
    <scope>FUNCTION</scope>
    <scope>SUBUNIT</scope>
    <source>
        <tissue>Placenta</tissue>
    </source>
</reference>
<reference key="5">
    <citation type="journal article" date="1999" name="J. Biol. Chem.">
        <title>Identification and functional characterization of a Na+-independent neutral amino acid transporter with broad substrate selectivity.</title>
        <authorList>
            <person name="Segawa H."/>
            <person name="Fukasawa Y."/>
            <person name="Miyamoto K."/>
            <person name="Takeda E."/>
            <person name="Endou H."/>
            <person name="Kanai Y."/>
        </authorList>
    </citation>
    <scope>FUNCTION</scope>
    <scope>SUBCELLULAR LOCATION</scope>
    <scope>SUBUNIT</scope>
    <scope>TISSUE SPECIFICITY</scope>
</reference>
<reference key="6">
    <citation type="journal article" date="2000" name="NeuroReport">
        <title>Expression of a system L neutral amino acid transporter at the blood-brain barrier.</title>
        <authorList>
            <person name="Matsuo H."/>
            <person name="Tsukada S."/>
            <person name="Nakata T."/>
            <person name="Chairoungdua A."/>
            <person name="Kim D.K."/>
            <person name="Cha S.H."/>
            <person name="Inatomi J."/>
            <person name="Yorifuji H."/>
            <person name="Fukuda J."/>
            <person name="Endou H."/>
            <person name="Kanai Y."/>
        </authorList>
    </citation>
    <scope>TISSUE SPECIFICITY</scope>
    <scope>SUBCELLULAR LOCATION</scope>
</reference>
<reference key="7">
    <citation type="journal article" date="2003" name="J. Neurochem.">
        <title>Site-directed mutagenesis of rabbit LAT1 at amino acids 219 and 234.</title>
        <authorList>
            <person name="Boado R.J."/>
            <person name="Li J.Y."/>
            <person name="Pardridge W.M."/>
        </authorList>
    </citation>
    <scope>FUNCTION</scope>
</reference>
<reference key="8">
    <citation type="journal article" date="2004" name="Biochem. Biophys. Res. Commun.">
        <title>Transcriptional regulation of the LAT-1/CD98 light chain.</title>
        <authorList>
            <person name="Padbury J.F."/>
            <person name="Diah S.K."/>
            <person name="McGonnigal B."/>
            <person name="Miller C."/>
            <person name="Fugere C."/>
            <person name="Kuzniar M."/>
            <person name="Thompson N.L."/>
        </authorList>
    </citation>
    <scope>INDUCTION</scope>
</reference>
<reference key="9">
    <citation type="journal article" date="2005" name="Invest. Ophthalmol. Vis. Sci.">
        <title>L-type amino acid transporter 1-mediated L-leucine transport at the inner blood-retinal barrier.</title>
        <authorList>
            <person name="Tomi M."/>
            <person name="Mori M."/>
            <person name="Tachikawa M."/>
            <person name="Katayama K."/>
            <person name="Terasaki T."/>
            <person name="Hosoya K."/>
        </authorList>
    </citation>
    <scope>FUNCTION</scope>
    <scope>TISSUE SPECIFICITY</scope>
</reference>
<reference key="10">
    <citation type="journal article" date="2012" name="Nat. Commun.">
        <title>Quantitative maps of protein phosphorylation sites across 14 different rat organs and tissues.</title>
        <authorList>
            <person name="Lundby A."/>
            <person name="Secher A."/>
            <person name="Lage K."/>
            <person name="Nordsborg N.B."/>
            <person name="Dmytriyev A."/>
            <person name="Lundby C."/>
            <person name="Olsen J.V."/>
        </authorList>
    </citation>
    <scope>PHOSPHORYLATION [LARGE SCALE ANALYSIS] AT SER-2 AND THR-5</scope>
    <scope>IDENTIFICATION BY MASS SPECTROMETRY [LARGE SCALE ANALYSIS]</scope>
</reference>
<reference key="11">
    <citation type="journal article" date="2013" name="J. Neurosci.">
        <title>Neuronal D-serine and glycine release via the Asc-1 transporter regulates NMDA receptor-dependent synaptic activity.</title>
        <authorList>
            <person name="Rosenberg D."/>
            <person name="Artoul S."/>
            <person name="Segal A.C."/>
            <person name="Kolodney G."/>
            <person name="Radzishevsky I."/>
            <person name="Dikopoltsev E."/>
            <person name="Foltyn V.N."/>
            <person name="Inoue R."/>
            <person name="Mori H."/>
            <person name="Billard J.M."/>
            <person name="Wolosker H."/>
        </authorList>
    </citation>
    <scope>FUNCTION</scope>
</reference>
<organism>
    <name type="scientific">Rattus norvegicus</name>
    <name type="common">Rat</name>
    <dbReference type="NCBI Taxonomy" id="10116"/>
    <lineage>
        <taxon>Eukaryota</taxon>
        <taxon>Metazoa</taxon>
        <taxon>Chordata</taxon>
        <taxon>Craniata</taxon>
        <taxon>Vertebrata</taxon>
        <taxon>Euteleostomi</taxon>
        <taxon>Mammalia</taxon>
        <taxon>Eutheria</taxon>
        <taxon>Euarchontoglires</taxon>
        <taxon>Glires</taxon>
        <taxon>Rodentia</taxon>
        <taxon>Myomorpha</taxon>
        <taxon>Muroidea</taxon>
        <taxon>Muridae</taxon>
        <taxon>Murinae</taxon>
        <taxon>Rattus</taxon>
    </lineage>
</organism>
<protein>
    <recommendedName>
        <fullName evidence="15">Amino acid transporter heavy chain SLC3A2</fullName>
    </recommendedName>
    <alternativeName>
        <fullName evidence="1">4F2 cell-surface antigen heavy chain</fullName>
        <shortName evidence="1">4F2hc</shortName>
    </alternativeName>
    <alternativeName>
        <fullName evidence="1">Solute carrier family 3 member 2</fullName>
    </alternativeName>
    <cdAntigenName>CD98</cdAntigenName>
</protein>
<sequence>MSQDTEVDMKDVELNELEPEKQPMNAADGAAAGEKNGLVKIKVAEDEAEAGVKFTGLSKEELLKVAGSPGWVRTRWALLLLFWLGWLGMLAGAVVIIVRAPRCRELPVQRWWHKGALYRIGDLQAFVGPEARGIAGLKNHLEYLSTLKVKGLVLGPIHKNQKDEVNETDLKQIDPDLGSQEDFKDLLQSAKKKSIHIILDLTPNYKGQNAWFLPPQADIVATKMKEALSSWLQDGVDGFQVRDVGKLANASLYLAEWQNITKNFSEDRLLIAGTASSDLQQIVNILESTSDLLLTSSYLSQPVFTGEHAELLVIKYLNATGSRWCSWSVSQAGLLTSFIPAQFLRLYQLLLFTLPGTPVFSYGDELGLQAVALPGQPMEAPFMLWNESSNSQTSSPVSLNMTVKGQNEDPGSLLTQFRRLSDLRGKERSLLHGDFDALSSSSGLFSYVRHWDQNERYLVVLNFQDVGLSARVGASNLPAGISLPASANLLLSTDSTRLSREEGTSLSLENLSLNPYEGLLLQFPFVA</sequence>
<feature type="chain" id="PRO_0000252236" description="Amino acid transporter heavy chain SLC3A2">
    <location>
        <begin position="1"/>
        <end position="527"/>
    </location>
</feature>
<feature type="topological domain" description="Cytoplasmic" evidence="4">
    <location>
        <begin position="1"/>
        <end position="75"/>
    </location>
</feature>
<feature type="transmembrane region" description="Helical; Signal-anchor for type II membrane protein" evidence="4">
    <location>
        <begin position="76"/>
        <end position="98"/>
    </location>
</feature>
<feature type="topological domain" description="Extracellular" evidence="4">
    <location>
        <begin position="99"/>
        <end position="527"/>
    </location>
</feature>
<feature type="region of interest" description="Disordered" evidence="5">
    <location>
        <begin position="1"/>
        <end position="31"/>
    </location>
</feature>
<feature type="compositionally biased region" description="Basic and acidic residues" evidence="5">
    <location>
        <begin position="7"/>
        <end position="21"/>
    </location>
</feature>
<feature type="modified residue" description="Phosphoserine" evidence="20">
    <location>
        <position position="2"/>
    </location>
</feature>
<feature type="modified residue" description="Phosphothreonine" evidence="20">
    <location>
        <position position="5"/>
    </location>
</feature>
<feature type="modified residue" description="Phosphoserine" evidence="1">
    <location>
        <position position="58"/>
    </location>
</feature>
<feature type="modified residue" description="Phosphoserine" evidence="1">
    <location>
        <position position="300"/>
    </location>
</feature>
<feature type="modified residue" description="Phosphoserine" evidence="1">
    <location>
        <position position="421"/>
    </location>
</feature>
<feature type="glycosylation site" description="N-linked (GlcNAc...) asparagine" evidence="4">
    <location>
        <position position="166"/>
    </location>
</feature>
<feature type="glycosylation site" description="N-linked (GlcNAc...) asparagine" evidence="4">
    <location>
        <position position="249"/>
    </location>
</feature>
<feature type="glycosylation site" description="N-linked (GlcNAc...) asparagine" evidence="1">
    <location>
        <position position="259"/>
    </location>
</feature>
<feature type="glycosylation site" description="N-linked (GlcNAc...) asparagine" evidence="4">
    <location>
        <position position="263"/>
    </location>
</feature>
<feature type="glycosylation site" description="N-linked (GlcNAc...) asparagine" evidence="1">
    <location>
        <position position="318"/>
    </location>
</feature>
<feature type="glycosylation site" description="N-linked (GlcNAc...) asparagine" evidence="4">
    <location>
        <position position="386"/>
    </location>
</feature>
<feature type="glycosylation site" description="N-linked (GlcNAc...) asparagine" evidence="1">
    <location>
        <position position="400"/>
    </location>
</feature>
<feature type="glycosylation site" description="N-linked (GlcNAc...) asparagine" evidence="4">
    <location>
        <position position="510"/>
    </location>
</feature>
<feature type="disulfide bond" description="Interchain (with C-164 in SLC7A5; C-158 in SLC7A11 and C-153 in SLC7A8)" evidence="1">
    <location>
        <position position="103"/>
    </location>
</feature>
<feature type="cross-link" description="Glycyl lysine isopeptide (Lys-Gly) (interchain with G-Cter in ubiquitin)" evidence="1">
    <location>
        <position position="42"/>
    </location>
</feature>
<feature type="cross-link" description="Glycyl lysine isopeptide (Lys-Gly) (interchain with G-Cter in SUMO2)" evidence="1">
    <location>
        <position position="59"/>
    </location>
</feature>
<evidence type="ECO:0000250" key="1">
    <source>
        <dbReference type="UniProtKB" id="P08195"/>
    </source>
</evidence>
<evidence type="ECO:0000250" key="2">
    <source>
        <dbReference type="UniProtKB" id="P10852"/>
    </source>
</evidence>
<evidence type="ECO:0000250" key="3">
    <source>
        <dbReference type="UniProtKB" id="P63115"/>
    </source>
</evidence>
<evidence type="ECO:0000255" key="4"/>
<evidence type="ECO:0000256" key="5">
    <source>
        <dbReference type="SAM" id="MobiDB-lite"/>
    </source>
</evidence>
<evidence type="ECO:0000269" key="6">
    <source>
    </source>
</evidence>
<evidence type="ECO:0000269" key="7">
    <source>
    </source>
</evidence>
<evidence type="ECO:0000269" key="8">
    <source>
    </source>
</evidence>
<evidence type="ECO:0000269" key="9">
    <source>
    </source>
</evidence>
<evidence type="ECO:0000269" key="10">
    <source>
    </source>
</evidence>
<evidence type="ECO:0000269" key="11">
    <source>
    </source>
</evidence>
<evidence type="ECO:0000269" key="12">
    <source>
    </source>
</evidence>
<evidence type="ECO:0000269" key="13">
    <source>
    </source>
</evidence>
<evidence type="ECO:0000269" key="14">
    <source>
    </source>
</evidence>
<evidence type="ECO:0000305" key="15"/>
<evidence type="ECO:0000305" key="16">
    <source>
    </source>
</evidence>
<evidence type="ECO:0000312" key="17">
    <source>
        <dbReference type="EMBL" id="AAC53560.1"/>
    </source>
</evidence>
<evidence type="ECO:0000312" key="18">
    <source>
        <dbReference type="EMBL" id="BAA33036.1"/>
    </source>
</evidence>
<evidence type="ECO:0000312" key="19">
    <source>
        <dbReference type="RGD" id="3073"/>
    </source>
</evidence>
<evidence type="ECO:0007744" key="20">
    <source>
    </source>
</evidence>
<accession>Q794F9</accession>
<name>4F2_RAT</name>
<proteinExistence type="evidence at protein level"/>